<accession>P96705</accession>
<accession>Q797F2</accession>
<gene>
    <name type="primary">ydgG</name>
    <name type="ordered locus">BSU05640</name>
</gene>
<feature type="chain" id="PRO_0000360552" description="Uncharacterized HTH-type transcriptional regulator YdgG">
    <location>
        <begin position="1"/>
        <end position="152"/>
    </location>
</feature>
<feature type="domain" description="HTH marR-type" evidence="1">
    <location>
        <begin position="3"/>
        <end position="143"/>
    </location>
</feature>
<feature type="DNA-binding region" description="H-T-H motif" evidence="1">
    <location>
        <begin position="55"/>
        <end position="78"/>
    </location>
</feature>
<keyword id="KW-0238">DNA-binding</keyword>
<keyword id="KW-1185">Reference proteome</keyword>
<keyword id="KW-0804">Transcription</keyword>
<keyword id="KW-0805">Transcription regulation</keyword>
<name>YDGG_BACSU</name>
<protein>
    <recommendedName>
        <fullName>Uncharacterized HTH-type transcriptional regulator YdgG</fullName>
    </recommendedName>
</protein>
<proteinExistence type="predicted"/>
<dbReference type="EMBL" id="AB001488">
    <property type="protein sequence ID" value="BAA19397.1"/>
    <property type="molecule type" value="Genomic_DNA"/>
</dbReference>
<dbReference type="EMBL" id="AL009126">
    <property type="protein sequence ID" value="CAB12371.1"/>
    <property type="molecule type" value="Genomic_DNA"/>
</dbReference>
<dbReference type="PIR" id="A69783">
    <property type="entry name" value="A69783"/>
</dbReference>
<dbReference type="RefSeq" id="NP_388445.1">
    <property type="nucleotide sequence ID" value="NC_000964.3"/>
</dbReference>
<dbReference type="RefSeq" id="WP_003242874.1">
    <property type="nucleotide sequence ID" value="NZ_OZ025638.1"/>
</dbReference>
<dbReference type="SMR" id="P96705"/>
<dbReference type="FunCoup" id="P96705">
    <property type="interactions" value="32"/>
</dbReference>
<dbReference type="STRING" id="224308.BSU05640"/>
<dbReference type="PaxDb" id="224308-BSU05640"/>
<dbReference type="EnsemblBacteria" id="CAB12371">
    <property type="protein sequence ID" value="CAB12371"/>
    <property type="gene ID" value="BSU_05640"/>
</dbReference>
<dbReference type="GeneID" id="939880"/>
<dbReference type="KEGG" id="bsu:BSU05640"/>
<dbReference type="PATRIC" id="fig|224308.179.peg.607"/>
<dbReference type="eggNOG" id="COG1846">
    <property type="taxonomic scope" value="Bacteria"/>
</dbReference>
<dbReference type="InParanoid" id="P96705"/>
<dbReference type="OrthoDB" id="2401593at2"/>
<dbReference type="PhylomeDB" id="P96705"/>
<dbReference type="BioCyc" id="BSUB:BSU05640-MONOMER"/>
<dbReference type="Proteomes" id="UP000001570">
    <property type="component" value="Chromosome"/>
</dbReference>
<dbReference type="GO" id="GO:0003677">
    <property type="term" value="F:DNA binding"/>
    <property type="evidence" value="ECO:0007669"/>
    <property type="project" value="UniProtKB-KW"/>
</dbReference>
<dbReference type="GO" id="GO:0003700">
    <property type="term" value="F:DNA-binding transcription factor activity"/>
    <property type="evidence" value="ECO:0007669"/>
    <property type="project" value="InterPro"/>
</dbReference>
<dbReference type="GO" id="GO:0006355">
    <property type="term" value="P:regulation of DNA-templated transcription"/>
    <property type="evidence" value="ECO:0000318"/>
    <property type="project" value="GO_Central"/>
</dbReference>
<dbReference type="GO" id="GO:0006950">
    <property type="term" value="P:response to stress"/>
    <property type="evidence" value="ECO:0000318"/>
    <property type="project" value="GO_Central"/>
</dbReference>
<dbReference type="Gene3D" id="1.10.10.10">
    <property type="entry name" value="Winged helix-like DNA-binding domain superfamily/Winged helix DNA-binding domain"/>
    <property type="match status" value="1"/>
</dbReference>
<dbReference type="InterPro" id="IPR000835">
    <property type="entry name" value="HTH_MarR-typ"/>
</dbReference>
<dbReference type="InterPro" id="IPR039422">
    <property type="entry name" value="MarR/SlyA-like"/>
</dbReference>
<dbReference type="InterPro" id="IPR036388">
    <property type="entry name" value="WH-like_DNA-bd_sf"/>
</dbReference>
<dbReference type="InterPro" id="IPR036390">
    <property type="entry name" value="WH_DNA-bd_sf"/>
</dbReference>
<dbReference type="PANTHER" id="PTHR33164">
    <property type="entry name" value="TRANSCRIPTIONAL REGULATOR, MARR FAMILY"/>
    <property type="match status" value="1"/>
</dbReference>
<dbReference type="PANTHER" id="PTHR33164:SF102">
    <property type="entry name" value="TRANSCRIPTIONAL REGULATORY PROTEIN"/>
    <property type="match status" value="1"/>
</dbReference>
<dbReference type="Pfam" id="PF01047">
    <property type="entry name" value="MarR"/>
    <property type="match status" value="1"/>
</dbReference>
<dbReference type="SMART" id="SM00347">
    <property type="entry name" value="HTH_MARR"/>
    <property type="match status" value="1"/>
</dbReference>
<dbReference type="SUPFAM" id="SSF46785">
    <property type="entry name" value="Winged helix' DNA-binding domain"/>
    <property type="match status" value="1"/>
</dbReference>
<dbReference type="PROSITE" id="PS50995">
    <property type="entry name" value="HTH_MARR_2"/>
    <property type="match status" value="1"/>
</dbReference>
<organism>
    <name type="scientific">Bacillus subtilis (strain 168)</name>
    <dbReference type="NCBI Taxonomy" id="224308"/>
    <lineage>
        <taxon>Bacteria</taxon>
        <taxon>Bacillati</taxon>
        <taxon>Bacillota</taxon>
        <taxon>Bacilli</taxon>
        <taxon>Bacillales</taxon>
        <taxon>Bacillaceae</taxon>
        <taxon>Bacillus</taxon>
    </lineage>
</organism>
<evidence type="ECO:0000255" key="1">
    <source>
        <dbReference type="PROSITE-ProRule" id="PRU00345"/>
    </source>
</evidence>
<sequence length="152" mass="17274">MNEQKLCQAINLFVEVLLEGTEFVHREINQDVFKHISREQADLLKILKVKGPTSPGSLAMYQNVHKSAISNRLKKLLEKGLVQWDDCPEKSDRRSKLINITPSGEHILEELDSAIFNALKPLIDDIDEEHLHSIIEIFTILKSKFKGGDSAE</sequence>
<reference key="1">
    <citation type="submission" date="1997-03" db="EMBL/GenBank/DDBJ databases">
        <title>A 148 kbp sequence of the region between 35 and 47 degree of the Bacillus subtilis genome.</title>
        <authorList>
            <person name="Kasahara Y."/>
            <person name="Nakai S."/>
            <person name="Lee S."/>
            <person name="Sadaie Y."/>
            <person name="Ogasawara N."/>
        </authorList>
    </citation>
    <scope>NUCLEOTIDE SEQUENCE [GENOMIC DNA]</scope>
    <source>
        <strain>168</strain>
    </source>
</reference>
<reference key="2">
    <citation type="journal article" date="1997" name="Nature">
        <title>The complete genome sequence of the Gram-positive bacterium Bacillus subtilis.</title>
        <authorList>
            <person name="Kunst F."/>
            <person name="Ogasawara N."/>
            <person name="Moszer I."/>
            <person name="Albertini A.M."/>
            <person name="Alloni G."/>
            <person name="Azevedo V."/>
            <person name="Bertero M.G."/>
            <person name="Bessieres P."/>
            <person name="Bolotin A."/>
            <person name="Borchert S."/>
            <person name="Borriss R."/>
            <person name="Boursier L."/>
            <person name="Brans A."/>
            <person name="Braun M."/>
            <person name="Brignell S.C."/>
            <person name="Bron S."/>
            <person name="Brouillet S."/>
            <person name="Bruschi C.V."/>
            <person name="Caldwell B."/>
            <person name="Capuano V."/>
            <person name="Carter N.M."/>
            <person name="Choi S.-K."/>
            <person name="Codani J.-J."/>
            <person name="Connerton I.F."/>
            <person name="Cummings N.J."/>
            <person name="Daniel R.A."/>
            <person name="Denizot F."/>
            <person name="Devine K.M."/>
            <person name="Duesterhoeft A."/>
            <person name="Ehrlich S.D."/>
            <person name="Emmerson P.T."/>
            <person name="Entian K.-D."/>
            <person name="Errington J."/>
            <person name="Fabret C."/>
            <person name="Ferrari E."/>
            <person name="Foulger D."/>
            <person name="Fritz C."/>
            <person name="Fujita M."/>
            <person name="Fujita Y."/>
            <person name="Fuma S."/>
            <person name="Galizzi A."/>
            <person name="Galleron N."/>
            <person name="Ghim S.-Y."/>
            <person name="Glaser P."/>
            <person name="Goffeau A."/>
            <person name="Golightly E.J."/>
            <person name="Grandi G."/>
            <person name="Guiseppi G."/>
            <person name="Guy B.J."/>
            <person name="Haga K."/>
            <person name="Haiech J."/>
            <person name="Harwood C.R."/>
            <person name="Henaut A."/>
            <person name="Hilbert H."/>
            <person name="Holsappel S."/>
            <person name="Hosono S."/>
            <person name="Hullo M.-F."/>
            <person name="Itaya M."/>
            <person name="Jones L.-M."/>
            <person name="Joris B."/>
            <person name="Karamata D."/>
            <person name="Kasahara Y."/>
            <person name="Klaerr-Blanchard M."/>
            <person name="Klein C."/>
            <person name="Kobayashi Y."/>
            <person name="Koetter P."/>
            <person name="Koningstein G."/>
            <person name="Krogh S."/>
            <person name="Kumano M."/>
            <person name="Kurita K."/>
            <person name="Lapidus A."/>
            <person name="Lardinois S."/>
            <person name="Lauber J."/>
            <person name="Lazarevic V."/>
            <person name="Lee S.-M."/>
            <person name="Levine A."/>
            <person name="Liu H."/>
            <person name="Masuda S."/>
            <person name="Mauel C."/>
            <person name="Medigue C."/>
            <person name="Medina N."/>
            <person name="Mellado R.P."/>
            <person name="Mizuno M."/>
            <person name="Moestl D."/>
            <person name="Nakai S."/>
            <person name="Noback M."/>
            <person name="Noone D."/>
            <person name="O'Reilly M."/>
            <person name="Ogawa K."/>
            <person name="Ogiwara A."/>
            <person name="Oudega B."/>
            <person name="Park S.-H."/>
            <person name="Parro V."/>
            <person name="Pohl T.M."/>
            <person name="Portetelle D."/>
            <person name="Porwollik S."/>
            <person name="Prescott A.M."/>
            <person name="Presecan E."/>
            <person name="Pujic P."/>
            <person name="Purnelle B."/>
            <person name="Rapoport G."/>
            <person name="Rey M."/>
            <person name="Reynolds S."/>
            <person name="Rieger M."/>
            <person name="Rivolta C."/>
            <person name="Rocha E."/>
            <person name="Roche B."/>
            <person name="Rose M."/>
            <person name="Sadaie Y."/>
            <person name="Sato T."/>
            <person name="Scanlan E."/>
            <person name="Schleich S."/>
            <person name="Schroeter R."/>
            <person name="Scoffone F."/>
            <person name="Sekiguchi J."/>
            <person name="Sekowska A."/>
            <person name="Seror S.J."/>
            <person name="Serror P."/>
            <person name="Shin B.-S."/>
            <person name="Soldo B."/>
            <person name="Sorokin A."/>
            <person name="Tacconi E."/>
            <person name="Takagi T."/>
            <person name="Takahashi H."/>
            <person name="Takemaru K."/>
            <person name="Takeuchi M."/>
            <person name="Tamakoshi A."/>
            <person name="Tanaka T."/>
            <person name="Terpstra P."/>
            <person name="Tognoni A."/>
            <person name="Tosato V."/>
            <person name="Uchiyama S."/>
            <person name="Vandenbol M."/>
            <person name="Vannier F."/>
            <person name="Vassarotti A."/>
            <person name="Viari A."/>
            <person name="Wambutt R."/>
            <person name="Wedler E."/>
            <person name="Wedler H."/>
            <person name="Weitzenegger T."/>
            <person name="Winters P."/>
            <person name="Wipat A."/>
            <person name="Yamamoto H."/>
            <person name="Yamane K."/>
            <person name="Yasumoto K."/>
            <person name="Yata K."/>
            <person name="Yoshida K."/>
            <person name="Yoshikawa H.-F."/>
            <person name="Zumstein E."/>
            <person name="Yoshikawa H."/>
            <person name="Danchin A."/>
        </authorList>
    </citation>
    <scope>NUCLEOTIDE SEQUENCE [LARGE SCALE GENOMIC DNA]</scope>
    <source>
        <strain>168</strain>
    </source>
</reference>